<gene>
    <name evidence="1" type="primary">argH</name>
    <name type="ordered locus">SbBS512_E4446</name>
</gene>
<comment type="catalytic activity">
    <reaction evidence="1">
        <text>2-(N(omega)-L-arginino)succinate = fumarate + L-arginine</text>
        <dbReference type="Rhea" id="RHEA:24020"/>
        <dbReference type="ChEBI" id="CHEBI:29806"/>
        <dbReference type="ChEBI" id="CHEBI:32682"/>
        <dbReference type="ChEBI" id="CHEBI:57472"/>
        <dbReference type="EC" id="4.3.2.1"/>
    </reaction>
</comment>
<comment type="pathway">
    <text evidence="1">Amino-acid biosynthesis; L-arginine biosynthesis; L-arginine from L-ornithine and carbamoyl phosphate: step 3/3.</text>
</comment>
<comment type="subcellular location">
    <subcellularLocation>
        <location evidence="1">Cytoplasm</location>
    </subcellularLocation>
</comment>
<comment type="similarity">
    <text evidence="1">Belongs to the lyase 1 family. Argininosuccinate lyase subfamily.</text>
</comment>
<keyword id="KW-0028">Amino-acid biosynthesis</keyword>
<keyword id="KW-0055">Arginine biosynthesis</keyword>
<keyword id="KW-0963">Cytoplasm</keyword>
<keyword id="KW-0456">Lyase</keyword>
<keyword id="KW-1185">Reference proteome</keyword>
<evidence type="ECO:0000255" key="1">
    <source>
        <dbReference type="HAMAP-Rule" id="MF_00006"/>
    </source>
</evidence>
<dbReference type="EC" id="4.3.2.1" evidence="1"/>
<dbReference type="EMBL" id="CP001063">
    <property type="protein sequence ID" value="ACD08130.1"/>
    <property type="molecule type" value="Genomic_DNA"/>
</dbReference>
<dbReference type="RefSeq" id="WP_001230080.1">
    <property type="nucleotide sequence ID" value="NC_010658.1"/>
</dbReference>
<dbReference type="SMR" id="B2TWF5"/>
<dbReference type="STRING" id="344609.SbBS512_E4446"/>
<dbReference type="KEGG" id="sbc:SbBS512_E4446"/>
<dbReference type="HOGENOM" id="CLU_027272_2_3_6"/>
<dbReference type="UniPathway" id="UPA00068">
    <property type="reaction ID" value="UER00114"/>
</dbReference>
<dbReference type="Proteomes" id="UP000001030">
    <property type="component" value="Chromosome"/>
</dbReference>
<dbReference type="GO" id="GO:0005829">
    <property type="term" value="C:cytosol"/>
    <property type="evidence" value="ECO:0007669"/>
    <property type="project" value="TreeGrafter"/>
</dbReference>
<dbReference type="GO" id="GO:0004056">
    <property type="term" value="F:argininosuccinate lyase activity"/>
    <property type="evidence" value="ECO:0007669"/>
    <property type="project" value="UniProtKB-UniRule"/>
</dbReference>
<dbReference type="GO" id="GO:0042450">
    <property type="term" value="P:arginine biosynthetic process via ornithine"/>
    <property type="evidence" value="ECO:0007669"/>
    <property type="project" value="InterPro"/>
</dbReference>
<dbReference type="GO" id="GO:0006526">
    <property type="term" value="P:L-arginine biosynthetic process"/>
    <property type="evidence" value="ECO:0007669"/>
    <property type="project" value="UniProtKB-UniRule"/>
</dbReference>
<dbReference type="CDD" id="cd01359">
    <property type="entry name" value="Argininosuccinate_lyase"/>
    <property type="match status" value="1"/>
</dbReference>
<dbReference type="FunFam" id="1.10.275.10:FF:000004">
    <property type="entry name" value="Argininosuccinate lyase"/>
    <property type="match status" value="1"/>
</dbReference>
<dbReference type="FunFam" id="1.10.40.30:FF:000001">
    <property type="entry name" value="Argininosuccinate lyase"/>
    <property type="match status" value="1"/>
</dbReference>
<dbReference type="FunFam" id="1.20.200.10:FF:000006">
    <property type="entry name" value="Argininosuccinate lyase"/>
    <property type="match status" value="1"/>
</dbReference>
<dbReference type="Gene3D" id="1.10.40.30">
    <property type="entry name" value="Fumarase/aspartase (C-terminal domain)"/>
    <property type="match status" value="1"/>
</dbReference>
<dbReference type="Gene3D" id="1.20.200.10">
    <property type="entry name" value="Fumarase/aspartase (Central domain)"/>
    <property type="match status" value="1"/>
</dbReference>
<dbReference type="Gene3D" id="1.10.275.10">
    <property type="entry name" value="Fumarase/aspartase (N-terminal domain)"/>
    <property type="match status" value="1"/>
</dbReference>
<dbReference type="HAMAP" id="MF_00006">
    <property type="entry name" value="Arg_succ_lyase"/>
    <property type="match status" value="1"/>
</dbReference>
<dbReference type="InterPro" id="IPR029419">
    <property type="entry name" value="Arg_succ_lyase_C"/>
</dbReference>
<dbReference type="InterPro" id="IPR009049">
    <property type="entry name" value="Argininosuccinate_lyase"/>
</dbReference>
<dbReference type="InterPro" id="IPR024083">
    <property type="entry name" value="Fumarase/histidase_N"/>
</dbReference>
<dbReference type="InterPro" id="IPR020557">
    <property type="entry name" value="Fumarate_lyase_CS"/>
</dbReference>
<dbReference type="InterPro" id="IPR000362">
    <property type="entry name" value="Fumarate_lyase_fam"/>
</dbReference>
<dbReference type="InterPro" id="IPR022761">
    <property type="entry name" value="Fumarate_lyase_N"/>
</dbReference>
<dbReference type="InterPro" id="IPR008948">
    <property type="entry name" value="L-Aspartase-like"/>
</dbReference>
<dbReference type="NCBIfam" id="TIGR00838">
    <property type="entry name" value="argH"/>
    <property type="match status" value="1"/>
</dbReference>
<dbReference type="NCBIfam" id="NF008964">
    <property type="entry name" value="PRK12308.1"/>
    <property type="match status" value="1"/>
</dbReference>
<dbReference type="PANTHER" id="PTHR43814">
    <property type="entry name" value="ARGININOSUCCINATE LYASE"/>
    <property type="match status" value="1"/>
</dbReference>
<dbReference type="PANTHER" id="PTHR43814:SF1">
    <property type="entry name" value="ARGININOSUCCINATE LYASE"/>
    <property type="match status" value="1"/>
</dbReference>
<dbReference type="Pfam" id="PF14698">
    <property type="entry name" value="ASL_C2"/>
    <property type="match status" value="1"/>
</dbReference>
<dbReference type="Pfam" id="PF00206">
    <property type="entry name" value="Lyase_1"/>
    <property type="match status" value="1"/>
</dbReference>
<dbReference type="PRINTS" id="PR00145">
    <property type="entry name" value="ARGSUCLYASE"/>
</dbReference>
<dbReference type="PRINTS" id="PR00149">
    <property type="entry name" value="FUMRATELYASE"/>
</dbReference>
<dbReference type="SUPFAM" id="SSF48557">
    <property type="entry name" value="L-aspartase-like"/>
    <property type="match status" value="1"/>
</dbReference>
<dbReference type="PROSITE" id="PS00163">
    <property type="entry name" value="FUMARATE_LYASES"/>
    <property type="match status" value="1"/>
</dbReference>
<organism>
    <name type="scientific">Shigella boydii serotype 18 (strain CDC 3083-94 / BS512)</name>
    <dbReference type="NCBI Taxonomy" id="344609"/>
    <lineage>
        <taxon>Bacteria</taxon>
        <taxon>Pseudomonadati</taxon>
        <taxon>Pseudomonadota</taxon>
        <taxon>Gammaproteobacteria</taxon>
        <taxon>Enterobacterales</taxon>
        <taxon>Enterobacteriaceae</taxon>
        <taxon>Shigella</taxon>
    </lineage>
</organism>
<feature type="chain" id="PRO_1000089118" description="Argininosuccinate lyase">
    <location>
        <begin position="1"/>
        <end position="457"/>
    </location>
</feature>
<accession>B2TWF5</accession>
<reference key="1">
    <citation type="submission" date="2008-05" db="EMBL/GenBank/DDBJ databases">
        <title>Complete sequence of Shigella boydii serotype 18 strain BS512.</title>
        <authorList>
            <person name="Rasko D.A."/>
            <person name="Rosovitz M."/>
            <person name="Maurelli A.T."/>
            <person name="Myers G."/>
            <person name="Seshadri R."/>
            <person name="Cer R."/>
            <person name="Jiang L."/>
            <person name="Ravel J."/>
            <person name="Sebastian Y."/>
        </authorList>
    </citation>
    <scope>NUCLEOTIDE SEQUENCE [LARGE SCALE GENOMIC DNA]</scope>
    <source>
        <strain>CDC 3083-94 / BS512</strain>
    </source>
</reference>
<sequence>MALWGGRFTQAADQRFKQFNDSLRFDYRLAEQDIVGSVAWSKALVTVGVLTAEEQAQLEEALNVLLEDVRARPQQILESDAEDIHSWVEGKLIDKVGQLGKKLHTGRSRNDQVATDLKLWCKDTVSELLTANRQLQSALVETAQNNQDAVMPGYTHLQRAQPVTFAHWCLAYVEMLARDESRLQDALKRLDVSPLGCGALAGTAYEIDREQLAGWLGFASATRNSLDSVSDRDHVLELLSAAAIGMVHLSRFAEDLIFFNTGEAGFVELSDRVTSGSSLMPQKKNPDALELIRGKCGRVQGALTGMMMTLKGLPLAYNKDMQEDKEGLFDALDTWLDCLHMAALVLDGIQVKRPRCQEAAQQGYANATELADYLVAKGVPFREAHHIVGEAVVEAIRQGKPLEDLPLDELQKFSHVIGEDVYPILSLQSCLDKRAAKGGVSPQQVAQAIAFAQARLG</sequence>
<protein>
    <recommendedName>
        <fullName evidence="1">Argininosuccinate lyase</fullName>
        <shortName evidence="1">ASAL</shortName>
        <ecNumber evidence="1">4.3.2.1</ecNumber>
    </recommendedName>
    <alternativeName>
        <fullName evidence="1">Arginosuccinase</fullName>
    </alternativeName>
</protein>
<name>ARLY_SHIB3</name>
<proteinExistence type="inferred from homology"/>